<gene>
    <name evidence="4" type="primary">FAP100</name>
    <name evidence="4" type="synonym">MIA1</name>
    <name evidence="7" type="ORF">CHLREDRAFT_186878</name>
</gene>
<sequence>MPIYDEASVPGTAAGRSTTDVGATAGANPFNIPADEEIFRFREEERARKEQDKLIAQTMRVADKTTFAAQMQATATADARTLLRELRPPKGPKATTTLAASSVGTLDRRKEKENMADFIAKKREIFLLQMSLDTKRAEIKKLEERARQREEALKKSEQMLEEDALRFDAFLKENDEKVQEAIKKAEAEAKAKQDKVLEIKRLNTATAALRSELNKYEEQLEDCRRYKEFLDSITPPEWFEQQAAKLQRRKDALVAEWQSQCEALKQRREAALAAKTAAESDYANARTQQQAERAERAIKESVAALKEIMKEKEPQPPNLDFEMDPEDEEMYFQEPGQLLAVYKQLEESNLFYIQNAQETEEALEELRQKLRDTKTRMDAEAQGLQGQVSTLQASIVAAREKAKRLKDRTLENEGAFTLSMGSSNAPTSSVTGSSGPGGPVNLKELGDKVREVYVRCGFDADASISTLQMLTNIEMKLEEYLNLAEGMTPDYVDGAEKAREKDRRKVARDEKLSTQHREHEARMARALERAAAPVFKKTGKPLMFRSAPPQRKKVVQADDRNDEEAELEAYLAQDMI</sequence>
<comment type="function">
    <text evidence="3">As part of MIA, a complex associated with the outer doublet microtubules of the axoneme, may play a role in ciliary/flagellar motility by regulating the assembly and the activity of axonemal inner dynein arm.</text>
</comment>
<comment type="subunit">
    <text evidence="3">Interacts with FAP73; form the modifier of inner arm (MIA) complex.</text>
</comment>
<comment type="subcellular location">
    <subcellularLocation>
        <location evidence="3">Cytoplasm</location>
        <location evidence="3">Cytoskeleton</location>
        <location evidence="3">Flagellum axoneme</location>
    </subcellularLocation>
    <text evidence="3">Localizes to the outer doublet microtubules of the axoneme.</text>
</comment>
<comment type="disruption phenotype">
    <text evidence="3">The mia1-1, mia1-2, mia1-3 and mia1-4 mutants do not express the protein in the axoneme and display slightly jerky, slow swimming phenotypes, reduced flagellar beat frequencies and defective phototaxis.</text>
</comment>
<comment type="similarity">
    <text evidence="5">Belongs to the CFAP100 family.</text>
</comment>
<feature type="chain" id="PRO_0000437480" description="Cilia- and flagella-associated protein 100">
    <location>
        <begin position="1"/>
        <end position="576"/>
    </location>
</feature>
<feature type="region of interest" description="Disordered" evidence="2">
    <location>
        <begin position="1"/>
        <end position="29"/>
    </location>
</feature>
<feature type="region of interest" description="Disordered" evidence="2">
    <location>
        <begin position="417"/>
        <end position="439"/>
    </location>
</feature>
<feature type="region of interest" description="Disordered" evidence="2">
    <location>
        <begin position="495"/>
        <end position="519"/>
    </location>
</feature>
<feature type="region of interest" description="Disordered" evidence="2">
    <location>
        <begin position="538"/>
        <end position="563"/>
    </location>
</feature>
<feature type="coiled-coil region" evidence="1">
    <location>
        <begin position="125"/>
        <end position="226"/>
    </location>
</feature>
<feature type="coiled-coil region" evidence="1">
    <location>
        <begin position="254"/>
        <end position="311"/>
    </location>
</feature>
<feature type="coiled-coil region" evidence="1">
    <location>
        <begin position="342"/>
        <end position="408"/>
    </location>
</feature>
<protein>
    <recommendedName>
        <fullName evidence="5">Cilia- and flagella-associated protein 100</fullName>
    </recommendedName>
    <alternativeName>
        <fullName evidence="6">Flagella-associated protein 100</fullName>
    </alternativeName>
    <alternativeName>
        <fullName evidence="4">Modifier of inner arms 1 protein</fullName>
        <shortName evidence="4">Mia1p</shortName>
    </alternativeName>
</protein>
<evidence type="ECO:0000255" key="1"/>
<evidence type="ECO:0000256" key="2">
    <source>
        <dbReference type="SAM" id="MobiDB-lite"/>
    </source>
</evidence>
<evidence type="ECO:0000269" key="3">
    <source>
    </source>
</evidence>
<evidence type="ECO:0000303" key="4">
    <source>
    </source>
</evidence>
<evidence type="ECO:0000305" key="5"/>
<evidence type="ECO:0000305" key="6">
    <source>
    </source>
</evidence>
<evidence type="ECO:0000312" key="7">
    <source>
        <dbReference type="EMBL" id="EDP07473.1"/>
    </source>
</evidence>
<proteinExistence type="evidence at protein level"/>
<keyword id="KW-0002">3D-structure</keyword>
<keyword id="KW-0966">Cell projection</keyword>
<keyword id="KW-0969">Cilium</keyword>
<keyword id="KW-0175">Coiled coil</keyword>
<keyword id="KW-0963">Cytoplasm</keyword>
<keyword id="KW-0206">Cytoskeleton</keyword>
<keyword id="KW-0282">Flagellum</keyword>
<name>CP100_CHLRE</name>
<organism>
    <name type="scientific">Chlamydomonas reinhardtii</name>
    <name type="common">Chlamydomonas smithii</name>
    <dbReference type="NCBI Taxonomy" id="3055"/>
    <lineage>
        <taxon>Eukaryota</taxon>
        <taxon>Viridiplantae</taxon>
        <taxon>Chlorophyta</taxon>
        <taxon>core chlorophytes</taxon>
        <taxon>Chlorophyceae</taxon>
        <taxon>CS clade</taxon>
        <taxon>Chlamydomonadales</taxon>
        <taxon>Chlamydomonadaceae</taxon>
        <taxon>Chlamydomonas</taxon>
    </lineage>
</organism>
<accession>A8I4E9</accession>
<reference key="1">
    <citation type="journal article" date="2013" name="J. Cell Biol.">
        <title>The MIA complex is a conserved and novel dynein regulator essential for normal ciliary motility.</title>
        <authorList>
            <person name="Yamamoto R."/>
            <person name="Song K."/>
            <person name="Yanagisawa H."/>
            <person name="Fox L."/>
            <person name="Yagi T."/>
            <person name="Wirschell M."/>
            <person name="Hirono M."/>
            <person name="Kamiya R."/>
            <person name="Nicastro D."/>
            <person name="Sale W.S."/>
        </authorList>
    </citation>
    <scope>NUCLEOTIDE SEQUENCE [MRNA]</scope>
    <scope>FUNCTION</scope>
    <scope>INTERACTION WITH FAP73</scope>
    <scope>SUBCELLULAR LOCATION</scope>
    <scope>DISRUPTION PHENOTYPE</scope>
</reference>
<reference key="2">
    <citation type="journal article" date="2007" name="Science">
        <title>The Chlamydomonas genome reveals the evolution of key animal and plant functions.</title>
        <authorList>
            <person name="Merchant S.S."/>
            <person name="Prochnik S.E."/>
            <person name="Vallon O."/>
            <person name="Harris E.H."/>
            <person name="Karpowicz S.J."/>
            <person name="Witman G.B."/>
            <person name="Terry A."/>
            <person name="Salamov A."/>
            <person name="Fritz-Laylin L.K."/>
            <person name="Marechal-Drouard L."/>
            <person name="Marshall W.F."/>
            <person name="Qu L.H."/>
            <person name="Nelson D.R."/>
            <person name="Sanderfoot A.A."/>
            <person name="Spalding M.H."/>
            <person name="Kapitonov V.V."/>
            <person name="Ren Q."/>
            <person name="Ferris P."/>
            <person name="Lindquist E."/>
            <person name="Shapiro H."/>
            <person name="Lucas S.M."/>
            <person name="Grimwood J."/>
            <person name="Schmutz J."/>
            <person name="Cardol P."/>
            <person name="Cerutti H."/>
            <person name="Chanfreau G."/>
            <person name="Chen C.L."/>
            <person name="Cognat V."/>
            <person name="Croft M.T."/>
            <person name="Dent R."/>
            <person name="Dutcher S."/>
            <person name="Fernandez E."/>
            <person name="Fukuzawa H."/>
            <person name="Gonzalez-Ballester D."/>
            <person name="Gonzalez-Halphen D."/>
            <person name="Hallmann A."/>
            <person name="Hanikenne M."/>
            <person name="Hippler M."/>
            <person name="Inwood W."/>
            <person name="Jabbari K."/>
            <person name="Kalanon M."/>
            <person name="Kuras R."/>
            <person name="Lefebvre P.A."/>
            <person name="Lemaire S.D."/>
            <person name="Lobanov A.V."/>
            <person name="Lohr M."/>
            <person name="Manuell A."/>
            <person name="Meier I."/>
            <person name="Mets L."/>
            <person name="Mittag M."/>
            <person name="Mittelmeier T."/>
            <person name="Moroney J.V."/>
            <person name="Moseley J."/>
            <person name="Napoli C."/>
            <person name="Nedelcu A.M."/>
            <person name="Niyogi K."/>
            <person name="Novoselov S.V."/>
            <person name="Paulsen I.T."/>
            <person name="Pazour G.J."/>
            <person name="Purton S."/>
            <person name="Ral J.P."/>
            <person name="Riano-Pachon D.M."/>
            <person name="Riekhof W."/>
            <person name="Rymarquis L."/>
            <person name="Schroda M."/>
            <person name="Stern D."/>
            <person name="Umen J."/>
            <person name="Willows R."/>
            <person name="Wilson N."/>
            <person name="Zimmer S.L."/>
            <person name="Allmer J."/>
            <person name="Balk J."/>
            <person name="Bisova K."/>
            <person name="Chen C.J."/>
            <person name="Elias M."/>
            <person name="Gendler K."/>
            <person name="Hauser C."/>
            <person name="Lamb M.R."/>
            <person name="Ledford H."/>
            <person name="Long J.C."/>
            <person name="Minagawa J."/>
            <person name="Page M.D."/>
            <person name="Pan J."/>
            <person name="Pootakham W."/>
            <person name="Roje S."/>
            <person name="Rose A."/>
            <person name="Stahlberg E."/>
            <person name="Terauchi A.M."/>
            <person name="Yang P."/>
            <person name="Ball S."/>
            <person name="Bowler C."/>
            <person name="Dieckmann C.L."/>
            <person name="Gladyshev V.N."/>
            <person name="Green P."/>
            <person name="Jorgensen R."/>
            <person name="Mayfield S."/>
            <person name="Mueller-Roeber B."/>
            <person name="Rajamani S."/>
            <person name="Sayre R.T."/>
            <person name="Brokstein P."/>
            <person name="Dubchak I."/>
            <person name="Goodstein D."/>
            <person name="Hornick L."/>
            <person name="Huang Y.W."/>
            <person name="Jhaveri J."/>
            <person name="Luo Y."/>
            <person name="Martinez D."/>
            <person name="Ngau W.C."/>
            <person name="Otillar B."/>
            <person name="Poliakov A."/>
            <person name="Porter A."/>
            <person name="Szajkowski L."/>
            <person name="Werner G."/>
            <person name="Zhou K."/>
            <person name="Grigoriev I.V."/>
            <person name="Rokhsar D.S."/>
            <person name="Grossman A.R."/>
        </authorList>
    </citation>
    <scope>NUCLEOTIDE SEQUENCE [LARGE SCALE GENOMIC DNA]</scope>
    <source>
        <strain>CC-503</strain>
        <strain>cw92</strain>
    </source>
</reference>
<dbReference type="EMBL" id="AB692780">
    <property type="protein sequence ID" value="BAM95825.1"/>
    <property type="molecule type" value="mRNA"/>
</dbReference>
<dbReference type="EMBL" id="DS496112">
    <property type="protein sequence ID" value="EDP07473.1"/>
    <property type="molecule type" value="Genomic_DNA"/>
</dbReference>
<dbReference type="RefSeq" id="XP_001699777.1">
    <property type="nucleotide sequence ID" value="XM_001699725.1"/>
</dbReference>
<dbReference type="PDB" id="8GLV">
    <property type="method" value="EM"/>
    <property type="resolution" value="3.10 A"/>
    <property type="chains" value="AW=1-576"/>
</dbReference>
<dbReference type="PDBsum" id="8GLV"/>
<dbReference type="EMDB" id="EMD-40220"/>
<dbReference type="SMR" id="A8I4E9"/>
<dbReference type="PaxDb" id="3055-EDP07473"/>
<dbReference type="EnsemblPlants" id="PNW86981">
    <property type="protein sequence ID" value="PNW86981"/>
    <property type="gene ID" value="CHLRE_02g103950v5"/>
</dbReference>
<dbReference type="GeneID" id="5725540"/>
<dbReference type="Gramene" id="PNW86981">
    <property type="protein sequence ID" value="PNW86981"/>
    <property type="gene ID" value="CHLRE_02g103950v5"/>
</dbReference>
<dbReference type="KEGG" id="cre:CHLRE_02g103950v5"/>
<dbReference type="eggNOG" id="ENOG502QSDI">
    <property type="taxonomic scope" value="Eukaryota"/>
</dbReference>
<dbReference type="HOGENOM" id="CLU_026271_0_0_1"/>
<dbReference type="OMA" id="AWKLSMT"/>
<dbReference type="OrthoDB" id="10264063at2759"/>
<dbReference type="GO" id="GO:0097545">
    <property type="term" value="C:axonemal doublet microtubule"/>
    <property type="evidence" value="ECO:0000314"/>
    <property type="project" value="UniProtKB"/>
</dbReference>
<dbReference type="GO" id="GO:0031514">
    <property type="term" value="C:motile cilium"/>
    <property type="evidence" value="ECO:0000314"/>
    <property type="project" value="UniProtKB"/>
</dbReference>
<dbReference type="GO" id="GO:0070840">
    <property type="term" value="F:dynein complex binding"/>
    <property type="evidence" value="ECO:0000314"/>
    <property type="project" value="UniProtKB"/>
</dbReference>
<dbReference type="GO" id="GO:0048870">
    <property type="term" value="P:cell motility"/>
    <property type="evidence" value="ECO:0000315"/>
    <property type="project" value="UniProtKB"/>
</dbReference>
<dbReference type="GO" id="GO:0003341">
    <property type="term" value="P:cilium movement"/>
    <property type="evidence" value="ECO:0000315"/>
    <property type="project" value="UniProtKB"/>
</dbReference>
<dbReference type="GO" id="GO:0036159">
    <property type="term" value="P:inner dynein arm assembly"/>
    <property type="evidence" value="ECO:0000315"/>
    <property type="project" value="UniProtKB"/>
</dbReference>
<dbReference type="InterPro" id="IPR051147">
    <property type="entry name" value="CFAP_domain-containing"/>
</dbReference>
<dbReference type="InterPro" id="IPR025252">
    <property type="entry name" value="DUF4200"/>
</dbReference>
<dbReference type="PANTHER" id="PTHR21683:SF3">
    <property type="entry name" value="CILIA AND FLAGELLA ASSOCIATED PROTEIN 100"/>
    <property type="match status" value="1"/>
</dbReference>
<dbReference type="PANTHER" id="PTHR21683">
    <property type="entry name" value="COILED-COIL DOMAIN-CONTAINING PROTEIN 42 LIKE-2-LIKE-RELATED"/>
    <property type="match status" value="1"/>
</dbReference>
<dbReference type="Pfam" id="PF13863">
    <property type="entry name" value="DUF4200"/>
    <property type="match status" value="1"/>
</dbReference>